<accession>P45783</accession>
<keyword id="KW-0997">Cell inner membrane</keyword>
<keyword id="KW-1003">Cell membrane</keyword>
<keyword id="KW-0472">Membrane</keyword>
<keyword id="KW-0653">Protein transport</keyword>
<keyword id="KW-0812">Transmembrane</keyword>
<keyword id="KW-0813">Transport</keyword>
<feature type="chain" id="PRO_0000195052" description="Type II secretion system protein N">
    <location>
        <begin position="1" status="less than"/>
        <end position="47"/>
    </location>
</feature>
<feature type="non-terminal residue">
    <location>
        <position position="1"/>
    </location>
</feature>
<evidence type="ECO:0000250" key="1"/>
<evidence type="ECO:0000305" key="2"/>
<dbReference type="EMBL" id="X80506">
    <property type="protein sequence ID" value="CAA56671.1"/>
    <property type="molecule type" value="Genomic_DNA"/>
</dbReference>
<dbReference type="PIR" id="I39676">
    <property type="entry name" value="I39676"/>
</dbReference>
<dbReference type="STRING" id="1233098.GCA_000315855_00782"/>
<dbReference type="GO" id="GO:0005886">
    <property type="term" value="C:plasma membrane"/>
    <property type="evidence" value="ECO:0007669"/>
    <property type="project" value="UniProtKB-SubCell"/>
</dbReference>
<dbReference type="GO" id="GO:0015627">
    <property type="term" value="C:type II protein secretion system complex"/>
    <property type="evidence" value="ECO:0007669"/>
    <property type="project" value="InterPro"/>
</dbReference>
<dbReference type="GO" id="GO:0015628">
    <property type="term" value="P:protein secretion by the type II secretion system"/>
    <property type="evidence" value="ECO:0007669"/>
    <property type="project" value="InterPro"/>
</dbReference>
<dbReference type="InterPro" id="IPR022792">
    <property type="entry name" value="T2SS_protein-GspN"/>
</dbReference>
<dbReference type="Pfam" id="PF01203">
    <property type="entry name" value="T2SSN"/>
    <property type="match status" value="1"/>
</dbReference>
<proteinExistence type="inferred from homology"/>
<reference key="1">
    <citation type="journal article" date="1995" name="Gene">
        <title>Cloning and study of the genetic organization of the exe gene cluster of Aeromonas salmonicida.</title>
        <authorList>
            <person name="Karlyshev A.V."/>
            <person name="Macintyre S."/>
        </authorList>
    </citation>
    <scope>NUCLEOTIDE SEQUENCE [GENOMIC DNA]</scope>
    <source>
        <strain>ATCC 33658 / DSM 19634 / JCM 7874 / NCIMB 1102 / NCTC 12959</strain>
    </source>
</reference>
<name>GSPN_AERSA</name>
<gene>
    <name type="primary">exeN</name>
</gene>
<organism>
    <name type="scientific">Aeromonas salmonicida</name>
    <dbReference type="NCBI Taxonomy" id="645"/>
    <lineage>
        <taxon>Bacteria</taxon>
        <taxon>Pseudomonadati</taxon>
        <taxon>Pseudomonadota</taxon>
        <taxon>Gammaproteobacteria</taxon>
        <taxon>Aeromonadales</taxon>
        <taxon>Aeromonadaceae</taxon>
        <taxon>Aeromonas</taxon>
    </lineage>
</organism>
<comment type="function">
    <text evidence="1">Involved in a type II secretion system (T2SS, formerly general secretion pathway, GSP) for the export of proteins.</text>
</comment>
<comment type="subcellular location">
    <subcellularLocation>
        <location evidence="2">Cell inner membrane</location>
    </subcellularLocation>
</comment>
<comment type="similarity">
    <text evidence="2">Belongs to the GSP N family.</text>
</comment>
<sequence>LQANRQYLFQGSLKPGPELPEEMKQGLPFLGQPDGQGRFPLRYQGRI</sequence>
<protein>
    <recommendedName>
        <fullName>Type II secretion system protein N</fullName>
        <shortName>T2SS protein N</shortName>
    </recommendedName>
    <alternativeName>
        <fullName>General secretion pathway protein N</fullName>
    </alternativeName>
</protein>